<gene>
    <name evidence="1" type="primary">addA</name>
    <name type="ordered locus">BLi01157</name>
    <name type="ordered locus">BL01350</name>
</gene>
<sequence length="1230" mass="141091">MEISKPKGSTWTDDQWKAIVSSGRDILVAAAAGSGKTAVLVERIIRKITDQERPVDVDRLLVVTFTNASAAEMKHRIGEALEKELAENPGSLHLRRQLALLNKASISTLHSFCLQVIRKYYYLIDVDPAFRIADQTEGELLGDEVLDELFEEEYKKGNPAFFELVDRYTTDRHDLDLQHLVKRVYEFSRSHPDPEGWLHSLAELYDAASDTKVEALPFYSYIKEDIALVLEGMRQKLTRALDLTKQPGGPAPRAENFLDDLAQIDRLIQQQDDFSALHELVPTVSFQRLKPCKGDEYDPRLVDEAADLRNSAKKQLEKLKSDYFSRTPEQHLESLREMKPVIQTLVQLVLEYGRRFAEAKKEKAIVDFSDLEHDCLAILSVKNPAGEAVPSEAAKFYRHQFHEVLVDEYQDTNLVQEAILKLVAKEEHEGNLFMVGDVKQSIYRFRLAEPLLFLSKYKRFTDDGSGSGQKIDLNKNFRSRSDILDSTNFLFKQLMGEKVGEVEYDEQAELKLGASYPPNEATKTELLLIETPSGAPGEEAEELEAVQLEARAMAGQIRRLITEKFQVYDAKAKASRNIQYRDIVVLLRSMPWAPQIMDEFKQQGIPVYANLSTGYFEATEVSVTLSLLKIIDNAYQDIPLASVLRSPVVGLDENELSLIRIKDKKAPFYEAMKAYLAAADGDERLSEKLRRFDGLLKKWRAYAKNHSVAELIWEIYRDTKYLDYVGGMPGGKQRQANLRALYDRARSYEATSFRGLFRFLRFIERMQERGDDLGTARALSEQEDVVRLMTIHSSKGLEFPVVFTAGLGRNFNMMDLNKSYLLDKELGFGTKFIHPKWRISYPTLPLIAMKKKLRRELLSEELRVLYVALTRAKEKLYLVGTAKDKEKLLADWRTQAAGSEWLLPDYERFQAKSYLDFIGPALMRHRDMDESGAPPVIDEIREHPARFQVSWLSAADLQAEAVDQAGEERHDRLVQIQMGHAIEGAFEYEQQVRERLAWSYPYKDAAKVRTKQSVSEMKRQKEYEDEYGDRSLIRPSQEALLFKRPSFMMAKGLTAAERGTAMHTVMQHIPLTRTPEKNELSRLLDRLVEKELLTEDQRAAIEEDDILAFFDTEIGQKLFGARRVEREVPFNMTLSAKEVYPDLESADEPVLIQGIIDCLFETEDGFYLLDYKTDRIHGKYRNGFEGAEPILRKRYETQIQLYARAVETMIKMPLKGRALYFFDGGHVLLF</sequence>
<comment type="function">
    <text evidence="1">The heterodimer acts as both an ATP-dependent DNA helicase and an ATP-dependent, dual-direction single-stranded exonuclease. Recognizes the chi site generating a DNA molecule suitable for the initiation of homologous recombination. The AddA nuclease domain is required for chi fragment generation; this subunit has the helicase and 3' -&gt; 5' nuclease activities.</text>
</comment>
<comment type="catalytic activity">
    <reaction evidence="1">
        <text>Couples ATP hydrolysis with the unwinding of duplex DNA by translocating in the 3'-5' direction.</text>
        <dbReference type="EC" id="5.6.2.4"/>
    </reaction>
</comment>
<comment type="catalytic activity">
    <reaction evidence="1">
        <text>ATP + H2O = ADP + phosphate + H(+)</text>
        <dbReference type="Rhea" id="RHEA:13065"/>
        <dbReference type="ChEBI" id="CHEBI:15377"/>
        <dbReference type="ChEBI" id="CHEBI:15378"/>
        <dbReference type="ChEBI" id="CHEBI:30616"/>
        <dbReference type="ChEBI" id="CHEBI:43474"/>
        <dbReference type="ChEBI" id="CHEBI:456216"/>
        <dbReference type="EC" id="5.6.2.4"/>
    </reaction>
</comment>
<comment type="cofactor">
    <cofactor evidence="1">
        <name>Mg(2+)</name>
        <dbReference type="ChEBI" id="CHEBI:18420"/>
    </cofactor>
</comment>
<comment type="subunit">
    <text evidence="1">Heterodimer of AddA and AddB/RexB.</text>
</comment>
<comment type="similarity">
    <text evidence="1">Belongs to the helicase family. AddA subfamily.</text>
</comment>
<name>ADDA_BACLD</name>
<accession>Q65LJ9</accession>
<accession>Q62WZ0</accession>
<reference key="1">
    <citation type="journal article" date="2004" name="J. Mol. Microbiol. Biotechnol.">
        <title>The complete genome sequence of Bacillus licheniformis DSM13, an organism with great industrial potential.</title>
        <authorList>
            <person name="Veith B."/>
            <person name="Herzberg C."/>
            <person name="Steckel S."/>
            <person name="Feesche J."/>
            <person name="Maurer K.H."/>
            <person name="Ehrenreich P."/>
            <person name="Baeumer S."/>
            <person name="Henne A."/>
            <person name="Liesegang H."/>
            <person name="Merkl R."/>
            <person name="Ehrenreich A."/>
            <person name="Gottschalk G."/>
        </authorList>
    </citation>
    <scope>NUCLEOTIDE SEQUENCE [LARGE SCALE GENOMIC DNA]</scope>
    <source>
        <strain>ATCC 14580 / DSM 13 / JCM 2505 / CCUG 7422 / NBRC 12200 / NCIMB 9375 / NCTC 10341 / NRRL NRS-1264 / Gibson 46</strain>
    </source>
</reference>
<reference key="2">
    <citation type="journal article" date="2004" name="Genome Biol.">
        <title>Complete genome sequence of the industrial bacterium Bacillus licheniformis and comparisons with closely related Bacillus species.</title>
        <authorList>
            <person name="Rey M.W."/>
            <person name="Ramaiya P."/>
            <person name="Nelson B.A."/>
            <person name="Brody-Karpin S.D."/>
            <person name="Zaretsky E.J."/>
            <person name="Tang M."/>
            <person name="Lopez de Leon A."/>
            <person name="Xiang H."/>
            <person name="Gusti V."/>
            <person name="Clausen I.G."/>
            <person name="Olsen P.B."/>
            <person name="Rasmussen M.D."/>
            <person name="Andersen J.T."/>
            <person name="Joergensen P.L."/>
            <person name="Larsen T.S."/>
            <person name="Sorokin A."/>
            <person name="Bolotin A."/>
            <person name="Lapidus A."/>
            <person name="Galleron N."/>
            <person name="Ehrlich S.D."/>
            <person name="Berka R.M."/>
        </authorList>
    </citation>
    <scope>NUCLEOTIDE SEQUENCE [LARGE SCALE GENOMIC DNA]</scope>
    <source>
        <strain>ATCC 14580 / DSM 13 / JCM 2505 / CCUG 7422 / NBRC 12200 / NCIMB 9375 / NCTC 10341 / NRRL NRS-1264 / Gibson 46</strain>
    </source>
</reference>
<proteinExistence type="inferred from homology"/>
<evidence type="ECO:0000255" key="1">
    <source>
        <dbReference type="HAMAP-Rule" id="MF_01451"/>
    </source>
</evidence>
<keyword id="KW-0067">ATP-binding</keyword>
<keyword id="KW-0227">DNA damage</keyword>
<keyword id="KW-0234">DNA repair</keyword>
<keyword id="KW-0238">DNA-binding</keyword>
<keyword id="KW-0269">Exonuclease</keyword>
<keyword id="KW-0347">Helicase</keyword>
<keyword id="KW-0378">Hydrolase</keyword>
<keyword id="KW-0413">Isomerase</keyword>
<keyword id="KW-0540">Nuclease</keyword>
<keyword id="KW-0547">Nucleotide-binding</keyword>
<keyword id="KW-1185">Reference proteome</keyword>
<feature type="chain" id="PRO_0000379241" description="ATP-dependent helicase/nuclease subunit A">
    <location>
        <begin position="1"/>
        <end position="1230"/>
    </location>
</feature>
<feature type="domain" description="UvrD-like helicase ATP-binding" evidence="1">
    <location>
        <begin position="9"/>
        <end position="480"/>
    </location>
</feature>
<feature type="domain" description="UvrD-like helicase C-terminal" evidence="1">
    <location>
        <begin position="507"/>
        <end position="796"/>
    </location>
</feature>
<feature type="binding site" evidence="1">
    <location>
        <begin position="30"/>
        <end position="37"/>
    </location>
    <ligand>
        <name>ATP</name>
        <dbReference type="ChEBI" id="CHEBI:30616"/>
    </ligand>
</feature>
<protein>
    <recommendedName>
        <fullName evidence="1">ATP-dependent helicase/nuclease subunit A</fullName>
        <ecNumber evidence="1">3.1.-.-</ecNumber>
        <ecNumber evidence="1">5.6.2.4</ecNumber>
    </recommendedName>
    <alternativeName>
        <fullName evidence="1">ATP-dependent helicase/nuclease AddA</fullName>
    </alternativeName>
    <alternativeName>
        <fullName evidence="1">DNA 3'-5' helicase AddA</fullName>
    </alternativeName>
</protein>
<organism>
    <name type="scientific">Bacillus licheniformis (strain ATCC 14580 / DSM 13 / JCM 2505 / CCUG 7422 / NBRC 12200 / NCIMB 9375 / NCTC 10341 / NRRL NRS-1264 / Gibson 46)</name>
    <dbReference type="NCBI Taxonomy" id="279010"/>
    <lineage>
        <taxon>Bacteria</taxon>
        <taxon>Bacillati</taxon>
        <taxon>Bacillota</taxon>
        <taxon>Bacilli</taxon>
        <taxon>Bacillales</taxon>
        <taxon>Bacillaceae</taxon>
        <taxon>Bacillus</taxon>
    </lineage>
</organism>
<dbReference type="EC" id="3.1.-.-" evidence="1"/>
<dbReference type="EC" id="5.6.2.4" evidence="1"/>
<dbReference type="EMBL" id="CP000002">
    <property type="protein sequence ID" value="AAU22718.1"/>
    <property type="molecule type" value="Genomic_DNA"/>
</dbReference>
<dbReference type="EMBL" id="AE017333">
    <property type="protein sequence ID" value="AAU40065.1"/>
    <property type="molecule type" value="Genomic_DNA"/>
</dbReference>
<dbReference type="RefSeq" id="WP_011197743.1">
    <property type="nucleotide sequence ID" value="NC_006322.1"/>
</dbReference>
<dbReference type="SMR" id="Q65LJ9"/>
<dbReference type="STRING" id="279010.BL01350"/>
<dbReference type="GeneID" id="92862261"/>
<dbReference type="KEGG" id="bld:BLi01157"/>
<dbReference type="KEGG" id="bli:BL01350"/>
<dbReference type="PATRIC" id="fig|279010.13.peg.1140"/>
<dbReference type="eggNOG" id="COG1074">
    <property type="taxonomic scope" value="Bacteria"/>
</dbReference>
<dbReference type="HOGENOM" id="CLU_001114_3_1_9"/>
<dbReference type="Proteomes" id="UP000000606">
    <property type="component" value="Chromosome"/>
</dbReference>
<dbReference type="GO" id="GO:0005829">
    <property type="term" value="C:cytosol"/>
    <property type="evidence" value="ECO:0007669"/>
    <property type="project" value="TreeGrafter"/>
</dbReference>
<dbReference type="GO" id="GO:0033202">
    <property type="term" value="C:DNA helicase complex"/>
    <property type="evidence" value="ECO:0007669"/>
    <property type="project" value="TreeGrafter"/>
</dbReference>
<dbReference type="GO" id="GO:0043138">
    <property type="term" value="F:3'-5' DNA helicase activity"/>
    <property type="evidence" value="ECO:0007669"/>
    <property type="project" value="UniProtKB-UniRule"/>
</dbReference>
<dbReference type="GO" id="GO:0008408">
    <property type="term" value="F:3'-5' exonuclease activity"/>
    <property type="evidence" value="ECO:0007669"/>
    <property type="project" value="UniProtKB-UniRule"/>
</dbReference>
<dbReference type="GO" id="GO:0005524">
    <property type="term" value="F:ATP binding"/>
    <property type="evidence" value="ECO:0007669"/>
    <property type="project" value="UniProtKB-UniRule"/>
</dbReference>
<dbReference type="GO" id="GO:0016887">
    <property type="term" value="F:ATP hydrolysis activity"/>
    <property type="evidence" value="ECO:0007669"/>
    <property type="project" value="RHEA"/>
</dbReference>
<dbReference type="GO" id="GO:0003690">
    <property type="term" value="F:double-stranded DNA binding"/>
    <property type="evidence" value="ECO:0007669"/>
    <property type="project" value="UniProtKB-UniRule"/>
</dbReference>
<dbReference type="GO" id="GO:0000724">
    <property type="term" value="P:double-strand break repair via homologous recombination"/>
    <property type="evidence" value="ECO:0007669"/>
    <property type="project" value="UniProtKB-UniRule"/>
</dbReference>
<dbReference type="CDD" id="cd17932">
    <property type="entry name" value="DEXQc_UvrD"/>
    <property type="match status" value="1"/>
</dbReference>
<dbReference type="CDD" id="cd18807">
    <property type="entry name" value="SF1_C_UvrD"/>
    <property type="match status" value="1"/>
</dbReference>
<dbReference type="FunFam" id="3.40.50.300:FF:001196">
    <property type="entry name" value="ATP-dependent helicase/nuclease subunit A"/>
    <property type="match status" value="1"/>
</dbReference>
<dbReference type="FunFam" id="3.40.50.300:FF:001236">
    <property type="entry name" value="ATP-dependent helicase/nuclease subunit A"/>
    <property type="match status" value="1"/>
</dbReference>
<dbReference type="Gene3D" id="3.90.320.10">
    <property type="match status" value="1"/>
</dbReference>
<dbReference type="Gene3D" id="3.40.50.300">
    <property type="entry name" value="P-loop containing nucleotide triphosphate hydrolases"/>
    <property type="match status" value="4"/>
</dbReference>
<dbReference type="HAMAP" id="MF_01451">
    <property type="entry name" value="AddA"/>
    <property type="match status" value="1"/>
</dbReference>
<dbReference type="InterPro" id="IPR014152">
    <property type="entry name" value="AddA"/>
</dbReference>
<dbReference type="InterPro" id="IPR014017">
    <property type="entry name" value="DNA_helicase_UvrD-like_C"/>
</dbReference>
<dbReference type="InterPro" id="IPR000212">
    <property type="entry name" value="DNA_helicase_UvrD/REP"/>
</dbReference>
<dbReference type="InterPro" id="IPR027417">
    <property type="entry name" value="P-loop_NTPase"/>
</dbReference>
<dbReference type="InterPro" id="IPR011604">
    <property type="entry name" value="PDDEXK-like_dom_sf"/>
</dbReference>
<dbReference type="InterPro" id="IPR038726">
    <property type="entry name" value="PDDEXK_AddAB-type"/>
</dbReference>
<dbReference type="InterPro" id="IPR011335">
    <property type="entry name" value="Restrct_endonuc-II-like"/>
</dbReference>
<dbReference type="InterPro" id="IPR014016">
    <property type="entry name" value="UvrD-like_ATP-bd"/>
</dbReference>
<dbReference type="NCBIfam" id="TIGR02785">
    <property type="entry name" value="addA_Gpos"/>
    <property type="match status" value="1"/>
</dbReference>
<dbReference type="PANTHER" id="PTHR11070:SF48">
    <property type="entry name" value="ATP-DEPENDENT HELICASE_NUCLEASE SUBUNIT A"/>
    <property type="match status" value="1"/>
</dbReference>
<dbReference type="PANTHER" id="PTHR11070">
    <property type="entry name" value="UVRD / RECB / PCRA DNA HELICASE FAMILY MEMBER"/>
    <property type="match status" value="1"/>
</dbReference>
<dbReference type="Pfam" id="PF12705">
    <property type="entry name" value="PDDEXK_1"/>
    <property type="match status" value="1"/>
</dbReference>
<dbReference type="Pfam" id="PF00580">
    <property type="entry name" value="UvrD-helicase"/>
    <property type="match status" value="1"/>
</dbReference>
<dbReference type="Pfam" id="PF13361">
    <property type="entry name" value="UvrD_C"/>
    <property type="match status" value="1"/>
</dbReference>
<dbReference type="SUPFAM" id="SSF52540">
    <property type="entry name" value="P-loop containing nucleoside triphosphate hydrolases"/>
    <property type="match status" value="1"/>
</dbReference>
<dbReference type="SUPFAM" id="SSF52980">
    <property type="entry name" value="Restriction endonuclease-like"/>
    <property type="match status" value="1"/>
</dbReference>
<dbReference type="PROSITE" id="PS51198">
    <property type="entry name" value="UVRD_HELICASE_ATP_BIND"/>
    <property type="match status" value="1"/>
</dbReference>
<dbReference type="PROSITE" id="PS51217">
    <property type="entry name" value="UVRD_HELICASE_CTER"/>
    <property type="match status" value="1"/>
</dbReference>